<protein>
    <recommendedName>
        <fullName>General transcription factor IIF subunit 2</fullName>
    </recommendedName>
    <alternativeName>
        <fullName>Transcription initiation factor IIF subunit beta</fullName>
        <shortName>TFIIF-beta</shortName>
    </alternativeName>
</protein>
<proteinExistence type="evidence at transcript level"/>
<gene>
    <name type="primary">GTF2F2</name>
</gene>
<sequence>MAERGELDLTGAKQNTGVWLVKVPKYLSQQWAKAPGRGEVGKLRIAKNQGRTEVSFTLNEDLANIHDIGGKPASVSAPREHPFVLQSVGGQTLTVFTESSSDKLSLEGIVVQRAECRPAANENYMRLKRLQIEESSKPVRLSQQLDKVVTTNYKPVANHQYNIEYERKKKEDGKRARADKQHVLDMLFSAFEKHQYYNLKDLVDITKQPVSYLKDILKEIGVQNVKGIHKNTWELKPEYRHYQVEEKSD</sequence>
<comment type="function">
    <text evidence="2">TFIIF is a general transcription initiation factor that binds to RNA polymerase II and helps to recruit it to the initiation complex in collaboration with TFIIB.</text>
</comment>
<comment type="subunit">
    <text evidence="1 2">Heterodimer of an alpha and a beta subunit. Interacts with HTATSF1 and GPBP1 (By similarity). Interacts with URI1. Interacts with GTF2B (via N-terminus); this interaction is inhibited in presence of GTF2F1. Part of TBP-based Pol II pre-initiation complex (PIC), in which Pol II core assembles with general transcription factors and other specific initiation factors including GTF2E1, GTF2E2, GTF2F1, GTF2F2, TCEA1, ERCC2, ERCC3, GTF2H2, GTF2H3, GTF2H4, GTF2H5, GTF2A1, GTF2A2, GTF2B and TBP; this large multi-subunit PIC complex mediates DNA unwinding and targets Pol II core to the transcription start site where the first phosphodiester bond forms (By similarity).</text>
</comment>
<comment type="subcellular location">
    <subcellularLocation>
        <location evidence="1">Nucleus</location>
    </subcellularLocation>
</comment>
<comment type="similarity">
    <text evidence="3">Belongs to the TFIIF beta subunit family.</text>
</comment>
<dbReference type="EMBL" id="BC111360">
    <property type="protein sequence ID" value="AAI11361.1"/>
    <property type="molecule type" value="mRNA"/>
</dbReference>
<dbReference type="RefSeq" id="NP_001033153.1">
    <property type="nucleotide sequence ID" value="NM_001038064.1"/>
</dbReference>
<dbReference type="SMR" id="Q2T9L9"/>
<dbReference type="FunCoup" id="Q2T9L9">
    <property type="interactions" value="3182"/>
</dbReference>
<dbReference type="STRING" id="9913.ENSBTAP00000045836"/>
<dbReference type="PaxDb" id="9913-ENSBTAP00000045836"/>
<dbReference type="Ensembl" id="ENSBTAT00000048870.3">
    <property type="protein sequence ID" value="ENSBTAP00000045836.2"/>
    <property type="gene ID" value="ENSBTAG00000034495.5"/>
</dbReference>
<dbReference type="Ensembl" id="ENSBTAT00000078070.2">
    <property type="protein sequence ID" value="ENSBTAP00000061447.1"/>
    <property type="gene ID" value="ENSBTAG00000049772.2"/>
</dbReference>
<dbReference type="GeneID" id="509259"/>
<dbReference type="KEGG" id="bta:509259"/>
<dbReference type="CTD" id="2963"/>
<dbReference type="VEuPathDB" id="HostDB:ENSBTAG00000034495"/>
<dbReference type="VEuPathDB" id="HostDB:ENSBTAG00000049772"/>
<dbReference type="VGNC" id="VGNC:53815">
    <property type="gene designation" value="GTF2F2"/>
</dbReference>
<dbReference type="eggNOG" id="KOG2905">
    <property type="taxonomic scope" value="Eukaryota"/>
</dbReference>
<dbReference type="GeneTree" id="ENSGT00390000016051"/>
<dbReference type="HOGENOM" id="CLU_047858_1_0_1"/>
<dbReference type="InParanoid" id="Q2T9L9"/>
<dbReference type="OMA" id="PIADNCY"/>
<dbReference type="OrthoDB" id="26094at2759"/>
<dbReference type="TreeFam" id="TF314290"/>
<dbReference type="Reactome" id="R-BTA-112382">
    <property type="pathway name" value="Formation of RNA Pol II elongation complex"/>
</dbReference>
<dbReference type="Reactome" id="R-BTA-113418">
    <property type="pathway name" value="Formation of the Early Elongation Complex"/>
</dbReference>
<dbReference type="Reactome" id="R-BTA-674695">
    <property type="pathway name" value="RNA Polymerase II Pre-transcription Events"/>
</dbReference>
<dbReference type="Reactome" id="R-BTA-6796648">
    <property type="pathway name" value="TP53 Regulates Transcription of DNA Repair Genes"/>
</dbReference>
<dbReference type="Reactome" id="R-BTA-6803529">
    <property type="pathway name" value="FGFR2 alternative splicing"/>
</dbReference>
<dbReference type="Reactome" id="R-BTA-6807505">
    <property type="pathway name" value="RNA polymerase II transcribes snRNA genes"/>
</dbReference>
<dbReference type="Reactome" id="R-BTA-72086">
    <property type="pathway name" value="mRNA Capping"/>
</dbReference>
<dbReference type="Reactome" id="R-BTA-72163">
    <property type="pathway name" value="mRNA Splicing - Major Pathway"/>
</dbReference>
<dbReference type="Reactome" id="R-BTA-72165">
    <property type="pathway name" value="mRNA Splicing - Minor Pathway"/>
</dbReference>
<dbReference type="Reactome" id="R-BTA-72203">
    <property type="pathway name" value="Processing of Capped Intron-Containing Pre-mRNA"/>
</dbReference>
<dbReference type="Reactome" id="R-BTA-73776">
    <property type="pathway name" value="RNA Polymerase II Promoter Escape"/>
</dbReference>
<dbReference type="Reactome" id="R-BTA-73779">
    <property type="pathway name" value="RNA Polymerase II Transcription Pre-Initiation And Promoter Opening"/>
</dbReference>
<dbReference type="Reactome" id="R-BTA-75953">
    <property type="pathway name" value="RNA Polymerase II Transcription Initiation"/>
</dbReference>
<dbReference type="Reactome" id="R-BTA-75955">
    <property type="pathway name" value="RNA Polymerase II Transcription Elongation"/>
</dbReference>
<dbReference type="Reactome" id="R-BTA-76042">
    <property type="pathway name" value="RNA Polymerase II Transcription Initiation And Promoter Clearance"/>
</dbReference>
<dbReference type="Reactome" id="R-BTA-77075">
    <property type="pathway name" value="RNA Pol II CTD phosphorylation and interaction with CE"/>
</dbReference>
<dbReference type="Reactome" id="R-BTA-9018519">
    <property type="pathway name" value="Estrogen-dependent gene expression"/>
</dbReference>
<dbReference type="Proteomes" id="UP000009136">
    <property type="component" value="Chromosome 12"/>
</dbReference>
<dbReference type="Proteomes" id="UP000009136">
    <property type="component" value="Chromosome 13"/>
</dbReference>
<dbReference type="Bgee" id="ENSBTAG00000034495">
    <property type="expression patterns" value="Expressed in oocyte and 105 other cell types or tissues"/>
</dbReference>
<dbReference type="GO" id="GO:0005674">
    <property type="term" value="C:transcription factor TFIIF complex"/>
    <property type="evidence" value="ECO:0000318"/>
    <property type="project" value="GO_Central"/>
</dbReference>
<dbReference type="GO" id="GO:0003677">
    <property type="term" value="F:DNA binding"/>
    <property type="evidence" value="ECO:0007669"/>
    <property type="project" value="UniProtKB-KW"/>
</dbReference>
<dbReference type="GO" id="GO:0006366">
    <property type="term" value="P:transcription by RNA polymerase II"/>
    <property type="evidence" value="ECO:0000250"/>
    <property type="project" value="UniProtKB"/>
</dbReference>
<dbReference type="GO" id="GO:0006367">
    <property type="term" value="P:transcription initiation at RNA polymerase II promoter"/>
    <property type="evidence" value="ECO:0000318"/>
    <property type="project" value="GO_Central"/>
</dbReference>
<dbReference type="CDD" id="cd07980">
    <property type="entry name" value="TFIIF_beta"/>
    <property type="match status" value="1"/>
</dbReference>
<dbReference type="FunFam" id="1.10.10.10:FF:000035">
    <property type="entry name" value="General transcription factor IIF subunit 2"/>
    <property type="match status" value="1"/>
</dbReference>
<dbReference type="Gene3D" id="1.10.10.10">
    <property type="entry name" value="Winged helix-like DNA-binding domain superfamily/Winged helix DNA-binding domain"/>
    <property type="match status" value="1"/>
</dbReference>
<dbReference type="InterPro" id="IPR003196">
    <property type="entry name" value="TFIIF_beta"/>
</dbReference>
<dbReference type="InterPro" id="IPR040450">
    <property type="entry name" value="TFIIF_beta_HTH"/>
</dbReference>
<dbReference type="InterPro" id="IPR040504">
    <property type="entry name" value="TFIIF_beta_N"/>
</dbReference>
<dbReference type="InterPro" id="IPR011039">
    <property type="entry name" value="TFIIF_interaction"/>
</dbReference>
<dbReference type="InterPro" id="IPR036388">
    <property type="entry name" value="WH-like_DNA-bd_sf"/>
</dbReference>
<dbReference type="InterPro" id="IPR036390">
    <property type="entry name" value="WH_DNA-bd_sf"/>
</dbReference>
<dbReference type="PANTHER" id="PTHR10445">
    <property type="entry name" value="GENERAL TRANSCRIPTION FACTOR IIF SUBUNIT 2"/>
    <property type="match status" value="1"/>
</dbReference>
<dbReference type="PANTHER" id="PTHR10445:SF0">
    <property type="entry name" value="GENERAL TRANSCRIPTION FACTOR IIF SUBUNIT 2"/>
    <property type="match status" value="1"/>
</dbReference>
<dbReference type="Pfam" id="PF02270">
    <property type="entry name" value="TFIIF_beta"/>
    <property type="match status" value="1"/>
</dbReference>
<dbReference type="Pfam" id="PF17683">
    <property type="entry name" value="TFIIF_beta_N"/>
    <property type="match status" value="1"/>
</dbReference>
<dbReference type="PIRSF" id="PIRSF015849">
    <property type="entry name" value="TFIIF-beta"/>
    <property type="match status" value="1"/>
</dbReference>
<dbReference type="SUPFAM" id="SSF50916">
    <property type="entry name" value="Rap30/74 interaction domains"/>
    <property type="match status" value="1"/>
</dbReference>
<dbReference type="SUPFAM" id="SSF46785">
    <property type="entry name" value="Winged helix' DNA-binding domain"/>
    <property type="match status" value="1"/>
</dbReference>
<keyword id="KW-0007">Acetylation</keyword>
<keyword id="KW-0238">DNA-binding</keyword>
<keyword id="KW-0539">Nucleus</keyword>
<keyword id="KW-0597">Phosphoprotein</keyword>
<keyword id="KW-1185">Reference proteome</keyword>
<keyword id="KW-0804">Transcription</keyword>
<keyword id="KW-0805">Transcription regulation</keyword>
<name>T2FB_BOVIN</name>
<reference key="1">
    <citation type="submission" date="2005-12" db="EMBL/GenBank/DDBJ databases">
        <authorList>
            <consortium name="NIH - Mammalian Gene Collection (MGC) project"/>
        </authorList>
    </citation>
    <scope>NUCLEOTIDE SEQUENCE [LARGE SCALE MRNA]</scope>
    <source>
        <strain>Crossbred X Angus</strain>
        <tissue>Liver</tissue>
    </source>
</reference>
<organism>
    <name type="scientific">Bos taurus</name>
    <name type="common">Bovine</name>
    <dbReference type="NCBI Taxonomy" id="9913"/>
    <lineage>
        <taxon>Eukaryota</taxon>
        <taxon>Metazoa</taxon>
        <taxon>Chordata</taxon>
        <taxon>Craniata</taxon>
        <taxon>Vertebrata</taxon>
        <taxon>Euteleostomi</taxon>
        <taxon>Mammalia</taxon>
        <taxon>Eutheria</taxon>
        <taxon>Laurasiatheria</taxon>
        <taxon>Artiodactyla</taxon>
        <taxon>Ruminantia</taxon>
        <taxon>Pecora</taxon>
        <taxon>Bovidae</taxon>
        <taxon>Bovinae</taxon>
        <taxon>Bos</taxon>
    </lineage>
</organism>
<feature type="initiator methionine" description="Removed" evidence="2">
    <location>
        <position position="1"/>
    </location>
</feature>
<feature type="chain" id="PRO_0000260320" description="General transcription factor IIF subunit 2">
    <location>
        <begin position="2"/>
        <end position="249"/>
    </location>
</feature>
<feature type="binding site" evidence="2">
    <location>
        <position position="227"/>
    </location>
    <ligand>
        <name>DNA</name>
        <dbReference type="ChEBI" id="CHEBI:16991"/>
    </ligand>
</feature>
<feature type="binding site" evidence="2">
    <location>
        <position position="229"/>
    </location>
    <ligand>
        <name>DNA</name>
        <dbReference type="ChEBI" id="CHEBI:16991"/>
    </ligand>
</feature>
<feature type="modified residue" description="N-acetylalanine" evidence="2">
    <location>
        <position position="2"/>
    </location>
</feature>
<feature type="modified residue" description="N6-acetyllysine" evidence="2">
    <location>
        <position position="22"/>
    </location>
</feature>
<feature type="modified residue" description="N6-acetyllysine" evidence="2">
    <location>
        <position position="33"/>
    </location>
</feature>
<feature type="modified residue" description="N6-acetyllysine" evidence="2">
    <location>
        <position position="137"/>
    </location>
</feature>
<feature type="modified residue" description="Phosphoserine" evidence="2">
    <location>
        <position position="142"/>
    </location>
</feature>
<feature type="modified residue" description="Phosphoserine" evidence="2">
    <location>
        <position position="248"/>
    </location>
</feature>
<accession>Q2T9L9</accession>
<evidence type="ECO:0000250" key="1"/>
<evidence type="ECO:0000250" key="2">
    <source>
        <dbReference type="UniProtKB" id="P13984"/>
    </source>
</evidence>
<evidence type="ECO:0000305" key="3"/>